<protein>
    <recommendedName>
        <fullName>Blasticidin-S deaminase</fullName>
        <ecNumber>3.5.4.23</ecNumber>
    </recommendedName>
</protein>
<accession>P0C2P0</accession>
<accession>P78986</accession>
<accession>Q0CGS9</accession>
<feature type="chain" id="PRO_0000171689" description="Blasticidin-S deaminase">
    <location>
        <begin position="1"/>
        <end position="130"/>
    </location>
</feature>
<feature type="domain" description="CMP/dCMP-type deaminase" evidence="1">
    <location>
        <begin position="1"/>
        <end position="129"/>
    </location>
</feature>
<feature type="active site" description="Proton donor">
    <location>
        <position position="56"/>
    </location>
</feature>
<feature type="binding site" description="in other chain">
    <location>
        <position position="28"/>
    </location>
    <ligand>
        <name>substrate</name>
        <note>ligand shared between two homotetrameric partners</note>
    </ligand>
</feature>
<feature type="binding site">
    <location>
        <position position="54"/>
    </location>
    <ligand>
        <name>Zn(2+)</name>
        <dbReference type="ChEBI" id="CHEBI:29105"/>
        <note>catalytic</note>
    </ligand>
</feature>
<feature type="binding site" description="in other chain">
    <location>
        <position position="82"/>
    </location>
    <ligand>
        <name>substrate</name>
        <note>ligand shared between two homotetrameric partners</note>
    </ligand>
</feature>
<feature type="binding site">
    <location>
        <position position="88"/>
    </location>
    <ligand>
        <name>Zn(2+)</name>
        <dbReference type="ChEBI" id="CHEBI:29105"/>
        <note>catalytic</note>
    </ligand>
</feature>
<feature type="binding site">
    <location>
        <position position="91"/>
    </location>
    <ligand>
        <name>Zn(2+)</name>
        <dbReference type="ChEBI" id="CHEBI:29105"/>
        <note>catalytic</note>
    </ligand>
</feature>
<feature type="binding site">
    <location>
        <position position="126"/>
    </location>
    <ligand>
        <name>substrate</name>
        <note>ligand shared between two homotetrameric partners</note>
    </ligand>
</feature>
<feature type="binding site" description="in other chain">
    <location>
        <position position="128"/>
    </location>
    <ligand>
        <name>substrate</name>
        <note>ligand shared between two homotetrameric partners</note>
    </ligand>
</feature>
<feature type="mutagenesis site" description="Loss of activity." evidence="2">
    <original>E</original>
    <variation>D</variation>
    <location>
        <position position="56"/>
    </location>
</feature>
<feature type="mutagenesis site" description="Loss of activity." evidence="2">
    <original>E</original>
    <variation>Q</variation>
    <location>
        <position position="56"/>
    </location>
</feature>
<feature type="mutagenesis site" description="Loss of activity." evidence="2">
    <original>C</original>
    <variation>A</variation>
    <location>
        <position position="91"/>
    </location>
</feature>
<feature type="mutagenesis site" description="Loss of activity." evidence="2">
    <original>C</original>
    <variation>S</variation>
    <location>
        <position position="91"/>
    </location>
</feature>
<feature type="helix" evidence="5">
    <location>
        <begin position="5"/>
        <end position="20"/>
    </location>
</feature>
<feature type="strand" evidence="5">
    <location>
        <begin position="25"/>
        <end position="27"/>
    </location>
</feature>
<feature type="strand" evidence="5">
    <location>
        <begin position="29"/>
        <end position="35"/>
    </location>
</feature>
<feature type="strand" evidence="5">
    <location>
        <begin position="40"/>
        <end position="44"/>
    </location>
</feature>
<feature type="turn" evidence="5">
    <location>
        <begin position="49"/>
        <end position="51"/>
    </location>
</feature>
<feature type="helix" evidence="5">
    <location>
        <begin position="55"/>
        <end position="65"/>
    </location>
</feature>
<feature type="strand" evidence="5">
    <location>
        <begin position="71"/>
        <end position="78"/>
    </location>
</feature>
<feature type="turn" evidence="5">
    <location>
        <begin position="79"/>
        <end position="82"/>
    </location>
</feature>
<feature type="strand" evidence="5">
    <location>
        <begin position="83"/>
        <end position="85"/>
    </location>
</feature>
<feature type="helix" evidence="5">
    <location>
        <begin position="89"/>
        <end position="98"/>
    </location>
</feature>
<feature type="strand" evidence="5">
    <location>
        <begin position="103"/>
        <end position="107"/>
    </location>
</feature>
<feature type="strand" evidence="5">
    <location>
        <begin position="113"/>
        <end position="117"/>
    </location>
</feature>
<feature type="helix" evidence="5">
    <location>
        <begin position="118"/>
        <end position="121"/>
    </location>
</feature>
<sequence>MPLSQEESTLIERATATINSIPISEDYSVASAALSSDGRIFTGVNVYHFTGGPCAELVVLGTAAAAAAGNLTCIVAIGNENRGILSPCGRCRQVLLDLHPGIKAIVKDSDGQPTAVGIRELLPSGYVWEG</sequence>
<dbReference type="EC" id="3.5.4.23"/>
<dbReference type="EMBL" id="D83710">
    <property type="protein sequence ID" value="BAA12074.1"/>
    <property type="molecule type" value="mRNA"/>
</dbReference>
<dbReference type="PIR" id="S41571">
    <property type="entry name" value="S41571"/>
</dbReference>
<dbReference type="PDB" id="1WN5">
    <property type="method" value="X-ray"/>
    <property type="resolution" value="1.80 A"/>
    <property type="chains" value="A/B/C/D=1-130"/>
</dbReference>
<dbReference type="PDB" id="1WN6">
    <property type="method" value="X-ray"/>
    <property type="resolution" value="1.80 A"/>
    <property type="chains" value="A/B=1-130"/>
</dbReference>
<dbReference type="PDB" id="2Z3G">
    <property type="method" value="X-ray"/>
    <property type="resolution" value="1.50 A"/>
    <property type="chains" value="A/B/C/D=1-130"/>
</dbReference>
<dbReference type="PDB" id="2Z3H">
    <property type="method" value="X-ray"/>
    <property type="resolution" value="1.50 A"/>
    <property type="chains" value="A/B/C/D=1-130"/>
</dbReference>
<dbReference type="PDB" id="2Z3I">
    <property type="method" value="X-ray"/>
    <property type="resolution" value="1.80 A"/>
    <property type="chains" value="A/B/C/D=1-130"/>
</dbReference>
<dbReference type="PDB" id="2Z3J">
    <property type="method" value="X-ray"/>
    <property type="resolution" value="1.60 A"/>
    <property type="chains" value="A/B/C/D=1-130"/>
</dbReference>
<dbReference type="PDBsum" id="1WN5"/>
<dbReference type="PDBsum" id="1WN6"/>
<dbReference type="PDBsum" id="2Z3G"/>
<dbReference type="PDBsum" id="2Z3H"/>
<dbReference type="PDBsum" id="2Z3I"/>
<dbReference type="PDBsum" id="2Z3J"/>
<dbReference type="SMR" id="P0C2P0"/>
<dbReference type="DrugBank" id="DB04649">
    <property type="generic name" value="TETRAHEDRAL INTERMEDIATE OF BLASTICIDIN S"/>
</dbReference>
<dbReference type="VEuPathDB" id="FungiDB:ATEG_07113"/>
<dbReference type="BRENDA" id="3.5.4.23">
    <property type="organism ID" value="536"/>
</dbReference>
<dbReference type="EvolutionaryTrace" id="P0C2P0"/>
<dbReference type="GO" id="GO:0005829">
    <property type="term" value="C:cytosol"/>
    <property type="evidence" value="ECO:0007669"/>
    <property type="project" value="TreeGrafter"/>
</dbReference>
<dbReference type="GO" id="GO:0047711">
    <property type="term" value="F:blasticidin-S deaminase activity"/>
    <property type="evidence" value="ECO:0007669"/>
    <property type="project" value="UniProtKB-EC"/>
</dbReference>
<dbReference type="GO" id="GO:0004126">
    <property type="term" value="F:cytidine deaminase activity"/>
    <property type="evidence" value="ECO:0007669"/>
    <property type="project" value="TreeGrafter"/>
</dbReference>
<dbReference type="GO" id="GO:0042802">
    <property type="term" value="F:identical protein binding"/>
    <property type="evidence" value="ECO:0007669"/>
    <property type="project" value="UniProtKB-ARBA"/>
</dbReference>
<dbReference type="GO" id="GO:0008270">
    <property type="term" value="F:zinc ion binding"/>
    <property type="evidence" value="ECO:0007669"/>
    <property type="project" value="InterPro"/>
</dbReference>
<dbReference type="GO" id="GO:0009972">
    <property type="term" value="P:cytidine deamination"/>
    <property type="evidence" value="ECO:0007669"/>
    <property type="project" value="TreeGrafter"/>
</dbReference>
<dbReference type="GO" id="GO:0046677">
    <property type="term" value="P:response to antibiotic"/>
    <property type="evidence" value="ECO:0007669"/>
    <property type="project" value="UniProtKB-KW"/>
</dbReference>
<dbReference type="CDD" id="cd01283">
    <property type="entry name" value="cytidine_deaminase"/>
    <property type="match status" value="1"/>
</dbReference>
<dbReference type="Gene3D" id="3.40.140.10">
    <property type="entry name" value="Cytidine Deaminase, domain 2"/>
    <property type="match status" value="1"/>
</dbReference>
<dbReference type="InterPro" id="IPR016192">
    <property type="entry name" value="APOBEC/CMP_deaminase_Zn-bd"/>
</dbReference>
<dbReference type="InterPro" id="IPR002125">
    <property type="entry name" value="CMP_dCMP_dom"/>
</dbReference>
<dbReference type="InterPro" id="IPR050202">
    <property type="entry name" value="Cyt/Deoxycyt_deaminase"/>
</dbReference>
<dbReference type="InterPro" id="IPR016193">
    <property type="entry name" value="Cytidine_deaminase-like"/>
</dbReference>
<dbReference type="PANTHER" id="PTHR11644">
    <property type="entry name" value="CYTIDINE DEAMINASE"/>
    <property type="match status" value="1"/>
</dbReference>
<dbReference type="PANTHER" id="PTHR11644:SF2">
    <property type="entry name" value="CYTIDINE DEAMINASE"/>
    <property type="match status" value="1"/>
</dbReference>
<dbReference type="Pfam" id="PF00383">
    <property type="entry name" value="dCMP_cyt_deam_1"/>
    <property type="match status" value="1"/>
</dbReference>
<dbReference type="SUPFAM" id="SSF53927">
    <property type="entry name" value="Cytidine deaminase-like"/>
    <property type="match status" value="1"/>
</dbReference>
<dbReference type="PROSITE" id="PS00903">
    <property type="entry name" value="CYT_DCMP_DEAMINASES_1"/>
    <property type="match status" value="1"/>
</dbReference>
<dbReference type="PROSITE" id="PS51747">
    <property type="entry name" value="CYT_DCMP_DEAMINASES_2"/>
    <property type="match status" value="1"/>
</dbReference>
<organism>
    <name type="scientific">Aspergillus terreus</name>
    <dbReference type="NCBI Taxonomy" id="33178"/>
    <lineage>
        <taxon>Eukaryota</taxon>
        <taxon>Fungi</taxon>
        <taxon>Dikarya</taxon>
        <taxon>Ascomycota</taxon>
        <taxon>Pezizomycotina</taxon>
        <taxon>Eurotiomycetes</taxon>
        <taxon>Eurotiomycetidae</taxon>
        <taxon>Eurotiales</taxon>
        <taxon>Aspergillaceae</taxon>
        <taxon>Aspergillus</taxon>
        <taxon>Aspergillus subgen. Circumdati</taxon>
    </lineage>
</organism>
<proteinExistence type="evidence at protein level"/>
<keyword id="KW-0002">3D-structure</keyword>
<keyword id="KW-0046">Antibiotic resistance</keyword>
<keyword id="KW-0378">Hydrolase</keyword>
<keyword id="KW-0479">Metal-binding</keyword>
<keyword id="KW-0862">Zinc</keyword>
<evidence type="ECO:0000255" key="1">
    <source>
        <dbReference type="PROSITE-ProRule" id="PRU01083"/>
    </source>
</evidence>
<evidence type="ECO:0000269" key="2">
    <source>
    </source>
</evidence>
<evidence type="ECO:0000269" key="3">
    <source>
    </source>
</evidence>
<evidence type="ECO:0000305" key="4"/>
<evidence type="ECO:0007829" key="5">
    <source>
        <dbReference type="PDB" id="2Z3G"/>
    </source>
</evidence>
<name>BSD_ASPTE</name>
<gene>
    <name type="primary">bsd</name>
</gene>
<reference key="1">
    <citation type="journal article" date="1994" name="Mol. Gen. Genet.">
        <title>Cloning of the blasticidin S deaminase gene (BSD) from Aspergillus terreus and its use as a selectable marker for Schizosaccharomyces pombe and Pyricularia oryzae.</title>
        <authorList>
            <person name="Kimura M."/>
            <person name="Kamakura T."/>
            <person name="Tao Q.Z."/>
            <person name="Kaneko I."/>
            <person name="Yamaguchi I."/>
        </authorList>
    </citation>
    <scope>NUCLEOTIDE SEQUENCE [MRNA]</scope>
    <source>
        <strain>S-712 / ATCC 28865</strain>
    </source>
</reference>
<reference key="2">
    <citation type="journal article" date="2000" name="J. Biochem.">
        <title>Expression, purification, and characterization of blasticidin S deaminase (BSD) from Aspergillus terreus: the role of catalytic zinc in enzyme structure.</title>
        <authorList>
            <person name="Kimura M."/>
            <person name="Sekido S."/>
            <person name="Isogai Y."/>
            <person name="Yamaguchi I."/>
        </authorList>
    </citation>
    <scope>CHARACTERIZATION</scope>
    <scope>MUTAGENESIS OF GLU-56 AND CYS-91</scope>
</reference>
<reference key="3">
    <citation type="journal article" date="1999" name="Acta Crystallogr. D">
        <title>Crystallization and preliminary X-ray diffraction studies of blasticidin S deaminase from Aspergillus terreus.</title>
        <authorList>
            <person name="Nakasako M."/>
            <person name="Kimura M."/>
            <person name="Yamaguchi I."/>
        </authorList>
    </citation>
    <scope>X-RAY CRYSTALLOGRAPHY (2.0 ANGSTROMS)</scope>
</reference>
<reference key="4">
    <citation type="journal article" date="2007" name="J. Biol. Chem.">
        <title>Crystal structures of blasticidin S deaminase (BSD): implications for dynamic properties of catalytic zinc.</title>
        <authorList>
            <person name="Kumasaka T."/>
            <person name="Yamamoto M."/>
            <person name="Furuichi M."/>
            <person name="Nakasako M."/>
            <person name="Teh A.H."/>
            <person name="Kimura M."/>
            <person name="Yamaguchi I."/>
            <person name="Ueki T."/>
        </authorList>
    </citation>
    <scope>X-RAY CRYSTALLOGRAPHY (1.5 ANGSTROMS) IN COMPLEXES WITH SUBSTRATE AND ZINC IONS</scope>
    <scope>SUBUNIT</scope>
</reference>
<comment type="function">
    <text>Catalyzes the deamination of the cytosine moiety of the antibiotics blasticidin S, cytomycin and acetylblasticidin S.</text>
</comment>
<comment type="catalytic activity">
    <reaction>
        <text>blasticidin S + H2O + H(+) = deaminohydroxyblasticidin S + NH4(+)</text>
        <dbReference type="Rhea" id="RHEA:10148"/>
        <dbReference type="ChEBI" id="CHEBI:15377"/>
        <dbReference type="ChEBI" id="CHEBI:15378"/>
        <dbReference type="ChEBI" id="CHEBI:28938"/>
        <dbReference type="ChEBI" id="CHEBI:57289"/>
        <dbReference type="ChEBI" id="CHEBI:57697"/>
        <dbReference type="EC" id="3.5.4.23"/>
    </reaction>
</comment>
<comment type="cofactor">
    <cofactor>
        <name>Zn(2+)</name>
        <dbReference type="ChEBI" id="CHEBI:29105"/>
    </cofactor>
</comment>
<comment type="subunit">
    <text evidence="3">Homotetramer.</text>
</comment>
<comment type="similarity">
    <text evidence="4">Belongs to the cytidine and deoxycytidylate deaminase family.</text>
</comment>